<proteinExistence type="inferred from homology"/>
<evidence type="ECO:0000255" key="1">
    <source>
        <dbReference type="HAMAP-Rule" id="MF_03013"/>
    </source>
</evidence>
<evidence type="ECO:0000255" key="2">
    <source>
        <dbReference type="PROSITE-ProRule" id="PRU01167"/>
    </source>
</evidence>
<evidence type="ECO:0000256" key="3">
    <source>
        <dbReference type="SAM" id="MobiDB-lite"/>
    </source>
</evidence>
<name>CLU_ASPFC</name>
<gene>
    <name evidence="1" type="primary">clu1</name>
    <name type="synonym">tif31</name>
    <name type="ORF">AFUB_038330</name>
</gene>
<keyword id="KW-0963">Cytoplasm</keyword>
<keyword id="KW-0677">Repeat</keyword>
<keyword id="KW-0802">TPR repeat</keyword>
<reference key="1">
    <citation type="journal article" date="2008" name="PLoS Genet.">
        <title>Genomic islands in the pathogenic filamentous fungus Aspergillus fumigatus.</title>
        <authorList>
            <person name="Fedorova N.D."/>
            <person name="Khaldi N."/>
            <person name="Joardar V.S."/>
            <person name="Maiti R."/>
            <person name="Amedeo P."/>
            <person name="Anderson M.J."/>
            <person name="Crabtree J."/>
            <person name="Silva J.C."/>
            <person name="Badger J.H."/>
            <person name="Albarraq A."/>
            <person name="Angiuoli S."/>
            <person name="Bussey H."/>
            <person name="Bowyer P."/>
            <person name="Cotty P.J."/>
            <person name="Dyer P.S."/>
            <person name="Egan A."/>
            <person name="Galens K."/>
            <person name="Fraser-Liggett C.M."/>
            <person name="Haas B.J."/>
            <person name="Inman J.M."/>
            <person name="Kent R."/>
            <person name="Lemieux S."/>
            <person name="Malavazi I."/>
            <person name="Orvis J."/>
            <person name="Roemer T."/>
            <person name="Ronning C.M."/>
            <person name="Sundaram J.P."/>
            <person name="Sutton G."/>
            <person name="Turner G."/>
            <person name="Venter J.C."/>
            <person name="White O.R."/>
            <person name="Whitty B.R."/>
            <person name="Youngman P."/>
            <person name="Wolfe K.H."/>
            <person name="Goldman G.H."/>
            <person name="Wortman J.R."/>
            <person name="Jiang B."/>
            <person name="Denning D.W."/>
            <person name="Nierman W.C."/>
        </authorList>
    </citation>
    <scope>NUCLEOTIDE SEQUENCE [LARGE SCALE GENOMIC DNA]</scope>
    <source>
        <strain>CBS 144.89 / FGSC A1163 / CEA10</strain>
    </source>
</reference>
<organism>
    <name type="scientific">Aspergillus fumigatus (strain CBS 144.89 / FGSC A1163 / CEA10)</name>
    <name type="common">Neosartorya fumigata</name>
    <dbReference type="NCBI Taxonomy" id="451804"/>
    <lineage>
        <taxon>Eukaryota</taxon>
        <taxon>Fungi</taxon>
        <taxon>Dikarya</taxon>
        <taxon>Ascomycota</taxon>
        <taxon>Pezizomycotina</taxon>
        <taxon>Eurotiomycetes</taxon>
        <taxon>Eurotiomycetidae</taxon>
        <taxon>Eurotiales</taxon>
        <taxon>Aspergillaceae</taxon>
        <taxon>Aspergillus</taxon>
        <taxon>Aspergillus subgen. Fumigati</taxon>
    </lineage>
</organism>
<dbReference type="EMBL" id="DS499596">
    <property type="protein sequence ID" value="EDP52667.1"/>
    <property type="molecule type" value="Genomic_DNA"/>
</dbReference>
<dbReference type="SMR" id="B0XXS1"/>
<dbReference type="EnsemblFungi" id="EDP52667">
    <property type="protein sequence ID" value="EDP52667"/>
    <property type="gene ID" value="AFUB_038330"/>
</dbReference>
<dbReference type="VEuPathDB" id="FungiDB:AFUB_038330"/>
<dbReference type="HOGENOM" id="CLU_003256_2_0_1"/>
<dbReference type="OrthoDB" id="79437at5052"/>
<dbReference type="PhylomeDB" id="B0XXS1"/>
<dbReference type="Proteomes" id="UP000001699">
    <property type="component" value="Unassembled WGS sequence"/>
</dbReference>
<dbReference type="GO" id="GO:0005737">
    <property type="term" value="C:cytoplasm"/>
    <property type="evidence" value="ECO:0007669"/>
    <property type="project" value="UniProtKB-SubCell"/>
</dbReference>
<dbReference type="GO" id="GO:0003729">
    <property type="term" value="F:mRNA binding"/>
    <property type="evidence" value="ECO:0007669"/>
    <property type="project" value="TreeGrafter"/>
</dbReference>
<dbReference type="GO" id="GO:0048312">
    <property type="term" value="P:intracellular distribution of mitochondria"/>
    <property type="evidence" value="ECO:0007669"/>
    <property type="project" value="TreeGrafter"/>
</dbReference>
<dbReference type="GO" id="GO:0007005">
    <property type="term" value="P:mitochondrion organization"/>
    <property type="evidence" value="ECO:0007669"/>
    <property type="project" value="UniProtKB-UniRule"/>
</dbReference>
<dbReference type="CDD" id="cd15466">
    <property type="entry name" value="CLU-central"/>
    <property type="match status" value="1"/>
</dbReference>
<dbReference type="FunFam" id="1.25.40.10:FF:000293">
    <property type="entry name" value="Clustered mitochondria protein homolog"/>
    <property type="match status" value="1"/>
</dbReference>
<dbReference type="FunFam" id="1.25.40.10:FF:000532">
    <property type="entry name" value="Clustered mitochondria protein homolog"/>
    <property type="match status" value="1"/>
</dbReference>
<dbReference type="FunFam" id="3.30.2280.10:FF:000002">
    <property type="entry name" value="Clustered mitochondria protein homolog"/>
    <property type="match status" value="1"/>
</dbReference>
<dbReference type="Gene3D" id="3.30.2280.10">
    <property type="entry name" value="Hypothetical protein (hspc210)"/>
    <property type="match status" value="1"/>
</dbReference>
<dbReference type="Gene3D" id="1.25.40.10">
    <property type="entry name" value="Tetratricopeptide repeat domain"/>
    <property type="match status" value="2"/>
</dbReference>
<dbReference type="HAMAP" id="MF_03013">
    <property type="entry name" value="CLU"/>
    <property type="match status" value="1"/>
</dbReference>
<dbReference type="InterPro" id="IPR033646">
    <property type="entry name" value="CLU-central"/>
</dbReference>
<dbReference type="InterPro" id="IPR025697">
    <property type="entry name" value="CLU_dom"/>
</dbReference>
<dbReference type="InterPro" id="IPR028275">
    <property type="entry name" value="CLU_N"/>
</dbReference>
<dbReference type="InterPro" id="IPR027523">
    <property type="entry name" value="CLU_prot"/>
</dbReference>
<dbReference type="InterPro" id="IPR023231">
    <property type="entry name" value="GSKIP_dom_sf"/>
</dbReference>
<dbReference type="InterPro" id="IPR011990">
    <property type="entry name" value="TPR-like_helical_dom_sf"/>
</dbReference>
<dbReference type="InterPro" id="IPR019734">
    <property type="entry name" value="TPR_rpt"/>
</dbReference>
<dbReference type="PANTHER" id="PTHR12601:SF6">
    <property type="entry name" value="CLUSTERED MITOCHONDRIA PROTEIN HOMOLOG"/>
    <property type="match status" value="1"/>
</dbReference>
<dbReference type="PANTHER" id="PTHR12601">
    <property type="entry name" value="EUKARYOTIC TRANSLATION INITIATION FACTOR 3 SUBUNIT EIF-3"/>
    <property type="match status" value="1"/>
</dbReference>
<dbReference type="Pfam" id="PF13236">
    <property type="entry name" value="CLU"/>
    <property type="match status" value="1"/>
</dbReference>
<dbReference type="Pfam" id="PF15044">
    <property type="entry name" value="CLU_N"/>
    <property type="match status" value="1"/>
</dbReference>
<dbReference type="Pfam" id="PF12807">
    <property type="entry name" value="eIF3_p135"/>
    <property type="match status" value="1"/>
</dbReference>
<dbReference type="Pfam" id="PF13374">
    <property type="entry name" value="TPR_10"/>
    <property type="match status" value="2"/>
</dbReference>
<dbReference type="Pfam" id="PF13424">
    <property type="entry name" value="TPR_12"/>
    <property type="match status" value="1"/>
</dbReference>
<dbReference type="SUPFAM" id="SSF103107">
    <property type="entry name" value="Hypothetical protein c14orf129, hspc210"/>
    <property type="match status" value="1"/>
</dbReference>
<dbReference type="SUPFAM" id="SSF48452">
    <property type="entry name" value="TPR-like"/>
    <property type="match status" value="2"/>
</dbReference>
<dbReference type="PROSITE" id="PS51823">
    <property type="entry name" value="CLU"/>
    <property type="match status" value="1"/>
</dbReference>
<dbReference type="PROSITE" id="PS50005">
    <property type="entry name" value="TPR"/>
    <property type="match status" value="1"/>
</dbReference>
<sequence length="1310" mass="145979">MAIWSTRKVGLDNLRISQLLNFRGFDPSALVTKLTDPFSLQRLLTLNQSRSPPMVNRLKDSRKRRAAVVCRIRDTRDGWFSSLSSLTSSVIGLFQISVKLPHEPYKIQVMVSSQEQVQDVRQSIVELPSTFQYTCFHLEFNGKRINDFVELSEVEGLKADSEIVLVEDPYTEKEARMHVVRFRDLVGAAGDRSDNLHGLNAGLSLHDAVTAEAATDDVKEHSLSKYDIAASPSLETILPRAEAPLPKTVKSISLSAWNPPPYHLRQKGHLLYLQVTTNEGEQFQITSHVSGFYVNKCSNHKFDPLPRTTPKKVSAHSLLTLISKLSPSFNSAFEALQESNNKKDLLTTFPFQNAIPNSPWLVTPPSSNPNSHQADITRSQESYLVSGVDNAETLRDWNEEFQTTRELPRETVQDRVFRERLTSKLFADYNEAAARGAVLVARGEVAPLNPTEERDAQIFVYNNIFYSFGADGVGTFVSEGGDEAARVAVGKDVLGIKAVNQLDINGLFTPGTVVVDYLGKRIVGQSIVPGIFKQREPGEHQIDYGGVEGKDVVATHPDFVSVFEKMSKALRIKKHPVWDKEGKRHDLEGSVETKGLLGTDGRKYVLDLYRVTPLDVVWQEEPGSEDYPHRMSVLRLELVEAYWRSKMSQYVKAEVERRRAAKAQEDAANKEQPSETTESKEGESEEKAEEALDQERVDISGFQLALNPDVCSGQVPQTEEEKKQWAEDEKEVRDACEFLRSKVIPELIQDLHDGDVGFPMDGRSLSQLLHKRGINIRYLGKLAQLSKEKGSRLEALTTLLVQEMIARAFKHIANRYLRNVPAPFVASCVAHLLNCLLGADVNPKPSAEIDASLREIYPEGDFSFEKVTPETLRAEVEKQVTVRYRYTLETEWFSSLRHLQLLRDIAIKLGLQLGARDYAFTKAQLPAKVPVANGVNGASHDESKKKKKKGGDSKSPSRAVVEEKPVVSIVPDDIVNVVPLVKDASPRSSLAEEALEAGRISLMQNQKQLGQELILESLSLHEQIYGILHPEVAKLYHQLSMLYYQTDEKEAAVELARKAVIVTERTLGVDSADTILAYLNLSLFEHASGNTKTALVYIKHAMDLWKIIYGSNHPDSITTMNNAAVMLQHLKQYSDSRKWFEASLAVCESLFGKQSINTATILFQLAQALALDQDSKGAVGKMRDAYNIFLNQLGPNDRNTKEAETWLEQLTQNAVSIAKHAKDIQARRLRRINMNPRVTTLGTKVQPQVGQTAPEASGAKGAANASMDSRSIDELLKFIEGGDATSSRSKQKKRAAASNPKLRGSKKSSA</sequence>
<feature type="chain" id="PRO_0000366395" description="Clustered mitochondria protein homolog">
    <location>
        <begin position="1"/>
        <end position="1310"/>
    </location>
</feature>
<feature type="domain" description="Clu" evidence="2">
    <location>
        <begin position="375"/>
        <end position="619"/>
    </location>
</feature>
<feature type="repeat" description="TPR 1">
    <location>
        <begin position="1033"/>
        <end position="1066"/>
    </location>
</feature>
<feature type="repeat" description="TPR 2">
    <location>
        <begin position="1075"/>
        <end position="1108"/>
    </location>
</feature>
<feature type="repeat" description="TPR 3">
    <location>
        <begin position="1117"/>
        <end position="1150"/>
    </location>
</feature>
<feature type="region of interest" description="Disordered" evidence="3">
    <location>
        <begin position="662"/>
        <end position="692"/>
    </location>
</feature>
<feature type="region of interest" description="Disordered" evidence="3">
    <location>
        <begin position="931"/>
        <end position="960"/>
    </location>
</feature>
<feature type="region of interest" description="Disordered" evidence="3">
    <location>
        <begin position="1245"/>
        <end position="1266"/>
    </location>
</feature>
<feature type="region of interest" description="Disordered" evidence="3">
    <location>
        <begin position="1281"/>
        <end position="1310"/>
    </location>
</feature>
<feature type="compositionally biased region" description="Basic and acidic residues" evidence="3">
    <location>
        <begin position="662"/>
        <end position="682"/>
    </location>
</feature>
<protein>
    <recommendedName>
        <fullName evidence="1">Clustered mitochondria protein homolog</fullName>
    </recommendedName>
    <alternativeName>
        <fullName evidence="1">Protein TIF31 homolog</fullName>
    </alternativeName>
</protein>
<accession>B0XXS1</accession>
<comment type="function">
    <text evidence="1">mRNA-binding protein involved in proper cytoplasmic distribution of mitochondria.</text>
</comment>
<comment type="subunit">
    <text evidence="1">May associate with the eukaryotic translation initiation factor 3 (eIF-3) complex.</text>
</comment>
<comment type="subcellular location">
    <subcellularLocation>
        <location evidence="1">Cytoplasm</location>
    </subcellularLocation>
</comment>
<comment type="similarity">
    <text evidence="1">Belongs to the CLU family.</text>
</comment>